<protein>
    <recommendedName>
        <fullName>AP2/ERF and B3 domain-containing transcription factor RAV1</fullName>
    </recommendedName>
    <alternativeName>
        <fullName>Ethylene-responsive transcription factor RAV1</fullName>
    </alternativeName>
    <alternativeName>
        <fullName>Protein RELATED TO ABI3/VP1 1</fullName>
    </alternativeName>
</protein>
<name>RAV1_ARATH</name>
<comment type="function">
    <text evidence="4 5">Binds specifically to bipartite recognition sequences composed of two unrelated motifs, 5'-CAACA-3' and 5'-CACCTG-3'. May function as negative regulator of plant growth and development.</text>
</comment>
<comment type="subunit">
    <text>Monomer.</text>
</comment>
<comment type="subcellular location">
    <subcellularLocation>
        <location evidence="6">Nucleus</location>
    </subcellularLocation>
</comment>
<comment type="tissue specificity">
    <text evidence="5">Expressed in all tissues examined: Roots, rosette leaves, cauline leaves, inflorescence stems, flowers and siliques. Highest expression in roots and rosette leaves. Very low expression in flowers.</text>
</comment>
<comment type="induction">
    <text evidence="4">Down-regulated by brassinosteroid and zeatin.</text>
</comment>
<comment type="domain">
    <text>Contains two distinct DNA-binding domains. One is located in the N-terminal region and binds to the 5'-CAACA-3' motif. The second is located in the C-terminal region and binds to the 5'-CACCTG-3' motif.</text>
</comment>
<comment type="similarity">
    <text evidence="6">Belongs to the AP2/ERF transcription factor family. RAV subfamily.</text>
</comment>
<dbReference type="EMBL" id="AB013886">
    <property type="protein sequence ID" value="BAA34250.1"/>
    <property type="molecule type" value="mRNA"/>
</dbReference>
<dbReference type="EMBL" id="AC011810">
    <property type="protein sequence ID" value="AAG09554.1"/>
    <property type="molecule type" value="Genomic_DNA"/>
</dbReference>
<dbReference type="EMBL" id="CP002684">
    <property type="protein sequence ID" value="AEE28991.1"/>
    <property type="molecule type" value="Genomic_DNA"/>
</dbReference>
<dbReference type="EMBL" id="AY063855">
    <property type="protein sequence ID" value="AAL36211.1"/>
    <property type="molecule type" value="mRNA"/>
</dbReference>
<dbReference type="EMBL" id="AY091291">
    <property type="protein sequence ID" value="AAM14230.1"/>
    <property type="molecule type" value="mRNA"/>
</dbReference>
<dbReference type="PIR" id="T51329">
    <property type="entry name" value="T51329"/>
</dbReference>
<dbReference type="RefSeq" id="NP_172784.1">
    <property type="nucleotide sequence ID" value="NM_101197.4"/>
</dbReference>
<dbReference type="PDB" id="1WID">
    <property type="method" value="NMR"/>
    <property type="chains" value="A=182-298"/>
</dbReference>
<dbReference type="PDBsum" id="1WID"/>
<dbReference type="SMR" id="Q9ZWM9"/>
<dbReference type="BioGRID" id="23126">
    <property type="interactions" value="16"/>
</dbReference>
<dbReference type="FunCoup" id="Q9ZWM9">
    <property type="interactions" value="41"/>
</dbReference>
<dbReference type="IntAct" id="Q9ZWM9">
    <property type="interactions" value="8"/>
</dbReference>
<dbReference type="STRING" id="3702.Q9ZWM9"/>
<dbReference type="GlyGen" id="Q9ZWM9">
    <property type="glycosylation" value="1 site"/>
</dbReference>
<dbReference type="iPTMnet" id="Q9ZWM9"/>
<dbReference type="PaxDb" id="3702-AT1G13260.1"/>
<dbReference type="ProteomicsDB" id="236987"/>
<dbReference type="EnsemblPlants" id="AT1G13260.1">
    <property type="protein sequence ID" value="AT1G13260.1"/>
    <property type="gene ID" value="AT1G13260"/>
</dbReference>
<dbReference type="GeneID" id="837886"/>
<dbReference type="Gramene" id="AT1G13260.1">
    <property type="protein sequence ID" value="AT1G13260.1"/>
    <property type="gene ID" value="AT1G13260"/>
</dbReference>
<dbReference type="KEGG" id="ath:AT1G13260"/>
<dbReference type="Araport" id="AT1G13260"/>
<dbReference type="TAIR" id="AT1G13260">
    <property type="gene designation" value="RAV1"/>
</dbReference>
<dbReference type="eggNOG" id="ENOG502QRVI">
    <property type="taxonomic scope" value="Eukaryota"/>
</dbReference>
<dbReference type="HOGENOM" id="CLU_038898_0_0_1"/>
<dbReference type="InParanoid" id="Q9ZWM9"/>
<dbReference type="OMA" id="KEDGFGT"/>
<dbReference type="PhylomeDB" id="Q9ZWM9"/>
<dbReference type="EvolutionaryTrace" id="Q9ZWM9"/>
<dbReference type="PRO" id="PR:Q9ZWM9"/>
<dbReference type="Proteomes" id="UP000006548">
    <property type="component" value="Chromosome 1"/>
</dbReference>
<dbReference type="ExpressionAtlas" id="Q9ZWM9">
    <property type="expression patterns" value="baseline and differential"/>
</dbReference>
<dbReference type="GO" id="GO:0005634">
    <property type="term" value="C:nucleus"/>
    <property type="evidence" value="ECO:0007005"/>
    <property type="project" value="TAIR"/>
</dbReference>
<dbReference type="GO" id="GO:0003677">
    <property type="term" value="F:DNA binding"/>
    <property type="evidence" value="ECO:0000314"/>
    <property type="project" value="TAIR"/>
</dbReference>
<dbReference type="GO" id="GO:0003700">
    <property type="term" value="F:DNA-binding transcription factor activity"/>
    <property type="evidence" value="ECO:0000250"/>
    <property type="project" value="TAIR"/>
</dbReference>
<dbReference type="GO" id="GO:0000976">
    <property type="term" value="F:transcription cis-regulatory region binding"/>
    <property type="evidence" value="ECO:0000353"/>
    <property type="project" value="TAIR"/>
</dbReference>
<dbReference type="GO" id="GO:0071456">
    <property type="term" value="P:cellular response to hypoxia"/>
    <property type="evidence" value="ECO:0007007"/>
    <property type="project" value="TAIR"/>
</dbReference>
<dbReference type="GO" id="GO:0009873">
    <property type="term" value="P:ethylene-activated signaling pathway"/>
    <property type="evidence" value="ECO:0007669"/>
    <property type="project" value="UniProtKB-KW"/>
</dbReference>
<dbReference type="GO" id="GO:0048527">
    <property type="term" value="P:lateral root development"/>
    <property type="evidence" value="ECO:0000315"/>
    <property type="project" value="TAIR"/>
</dbReference>
<dbReference type="GO" id="GO:0048366">
    <property type="term" value="P:leaf development"/>
    <property type="evidence" value="ECO:0000315"/>
    <property type="project" value="TAIR"/>
</dbReference>
<dbReference type="GO" id="GO:0045892">
    <property type="term" value="P:negative regulation of DNA-templated transcription"/>
    <property type="evidence" value="ECO:0000314"/>
    <property type="project" value="TAIR"/>
</dbReference>
<dbReference type="GO" id="GO:0009910">
    <property type="term" value="P:negative regulation of flower development"/>
    <property type="evidence" value="ECO:0000315"/>
    <property type="project" value="TAIR"/>
</dbReference>
<dbReference type="GO" id="GO:0009741">
    <property type="term" value="P:response to brassinosteroid"/>
    <property type="evidence" value="ECO:0000270"/>
    <property type="project" value="TAIR"/>
</dbReference>
<dbReference type="CDD" id="cd00018">
    <property type="entry name" value="AP2"/>
    <property type="match status" value="1"/>
</dbReference>
<dbReference type="CDD" id="cd10017">
    <property type="entry name" value="B3_DNA"/>
    <property type="match status" value="1"/>
</dbReference>
<dbReference type="FunFam" id="3.30.730.10:FF:000008">
    <property type="entry name" value="AP2 domain-containing protein RAP2.8"/>
    <property type="match status" value="1"/>
</dbReference>
<dbReference type="FunFam" id="2.40.330.10:FF:000007">
    <property type="entry name" value="AP2/ERF and B3 domain-containing transcription factor RAV1"/>
    <property type="match status" value="1"/>
</dbReference>
<dbReference type="Gene3D" id="3.30.730.10">
    <property type="entry name" value="AP2/ERF domain"/>
    <property type="match status" value="1"/>
</dbReference>
<dbReference type="Gene3D" id="2.40.330.10">
    <property type="entry name" value="DNA-binding pseudobarrel domain"/>
    <property type="match status" value="1"/>
</dbReference>
<dbReference type="InterPro" id="IPR001471">
    <property type="entry name" value="AP2/ERF_dom"/>
</dbReference>
<dbReference type="InterPro" id="IPR036955">
    <property type="entry name" value="AP2/ERF_dom_sf"/>
</dbReference>
<dbReference type="InterPro" id="IPR003340">
    <property type="entry name" value="B3_DNA-bd"/>
</dbReference>
<dbReference type="InterPro" id="IPR016177">
    <property type="entry name" value="DNA-bd_dom_sf"/>
</dbReference>
<dbReference type="InterPro" id="IPR015300">
    <property type="entry name" value="DNA-bd_pseudobarrel_sf"/>
</dbReference>
<dbReference type="InterPro" id="IPR044800">
    <property type="entry name" value="LEC2-like"/>
</dbReference>
<dbReference type="PANTHER" id="PTHR31140:SF76">
    <property type="entry name" value="AP2_ERF AND B3 DOMAIN-CONTAINING TRANSCRIPTION FACTOR RAV1"/>
    <property type="match status" value="1"/>
</dbReference>
<dbReference type="PANTHER" id="PTHR31140">
    <property type="entry name" value="B3 DOMAIN-CONTAINING TRANSCRIPTION FACTOR ABI3"/>
    <property type="match status" value="1"/>
</dbReference>
<dbReference type="Pfam" id="PF00847">
    <property type="entry name" value="AP2"/>
    <property type="match status" value="1"/>
</dbReference>
<dbReference type="Pfam" id="PF02362">
    <property type="entry name" value="B3"/>
    <property type="match status" value="1"/>
</dbReference>
<dbReference type="SMART" id="SM00380">
    <property type="entry name" value="AP2"/>
    <property type="match status" value="1"/>
</dbReference>
<dbReference type="SMART" id="SM01019">
    <property type="entry name" value="B3"/>
    <property type="match status" value="1"/>
</dbReference>
<dbReference type="SUPFAM" id="SSF54171">
    <property type="entry name" value="DNA-binding domain"/>
    <property type="match status" value="1"/>
</dbReference>
<dbReference type="SUPFAM" id="SSF101936">
    <property type="entry name" value="DNA-binding pseudobarrel domain"/>
    <property type="match status" value="1"/>
</dbReference>
<dbReference type="PROSITE" id="PS51032">
    <property type="entry name" value="AP2_ERF"/>
    <property type="match status" value="1"/>
</dbReference>
<dbReference type="PROSITE" id="PS50863">
    <property type="entry name" value="B3"/>
    <property type="match status" value="1"/>
</dbReference>
<evidence type="ECO:0000255" key="1">
    <source>
        <dbReference type="PROSITE-ProRule" id="PRU00326"/>
    </source>
</evidence>
<evidence type="ECO:0000255" key="2">
    <source>
        <dbReference type="PROSITE-ProRule" id="PRU00366"/>
    </source>
</evidence>
<evidence type="ECO:0000256" key="3">
    <source>
        <dbReference type="SAM" id="MobiDB-lite"/>
    </source>
</evidence>
<evidence type="ECO:0000269" key="4">
    <source>
    </source>
</evidence>
<evidence type="ECO:0000269" key="5">
    <source>
    </source>
</evidence>
<evidence type="ECO:0000305" key="6"/>
<evidence type="ECO:0000312" key="7">
    <source>
        <dbReference type="EMBL" id="AAL36211.1"/>
    </source>
</evidence>
<evidence type="ECO:0007829" key="8">
    <source>
        <dbReference type="PDB" id="1WID"/>
    </source>
</evidence>
<proteinExistence type="evidence at protein level"/>
<gene>
    <name type="primary">RAV1</name>
    <name type="ordered locus">At1g13260</name>
    <name type="ORF">T6J4.2</name>
</gene>
<keyword id="KW-0002">3D-structure</keyword>
<keyword id="KW-0238">DNA-binding</keyword>
<keyword id="KW-0936">Ethylene signaling pathway</keyword>
<keyword id="KW-0539">Nucleus</keyword>
<keyword id="KW-1185">Reference proteome</keyword>
<keyword id="KW-0804">Transcription</keyword>
<keyword id="KW-0805">Transcription regulation</keyword>
<organism>
    <name type="scientific">Arabidopsis thaliana</name>
    <name type="common">Mouse-ear cress</name>
    <dbReference type="NCBI Taxonomy" id="3702"/>
    <lineage>
        <taxon>Eukaryota</taxon>
        <taxon>Viridiplantae</taxon>
        <taxon>Streptophyta</taxon>
        <taxon>Embryophyta</taxon>
        <taxon>Tracheophyta</taxon>
        <taxon>Spermatophyta</taxon>
        <taxon>Magnoliopsida</taxon>
        <taxon>eudicotyledons</taxon>
        <taxon>Gunneridae</taxon>
        <taxon>Pentapetalae</taxon>
        <taxon>rosids</taxon>
        <taxon>malvids</taxon>
        <taxon>Brassicales</taxon>
        <taxon>Brassicaceae</taxon>
        <taxon>Camelineae</taxon>
        <taxon>Arabidopsis</taxon>
    </lineage>
</organism>
<reference key="1">
    <citation type="journal article" date="1999" name="Nucleic Acids Res.">
        <title>RAV1, a novel DNA-binding protein, binds to bipartite recognition sequence through two distinct DNA-binding domains uniquely found in higher plants.</title>
        <authorList>
            <person name="Kagaya Y."/>
            <person name="Ohmiya K."/>
            <person name="Hattori T."/>
        </authorList>
    </citation>
    <scope>NUCLEOTIDE SEQUENCE [MRNA]</scope>
    <scope>FUNCTION</scope>
    <scope>TISSUE SPECIFICITY</scope>
    <source>
        <strain>cv. Columbia</strain>
        <tissue>Seedling</tissue>
    </source>
</reference>
<reference key="2">
    <citation type="journal article" date="2000" name="Nature">
        <title>Sequence and analysis of chromosome 1 of the plant Arabidopsis thaliana.</title>
        <authorList>
            <person name="Theologis A."/>
            <person name="Ecker J.R."/>
            <person name="Palm C.J."/>
            <person name="Federspiel N.A."/>
            <person name="Kaul S."/>
            <person name="White O."/>
            <person name="Alonso J."/>
            <person name="Altafi H."/>
            <person name="Araujo R."/>
            <person name="Bowman C.L."/>
            <person name="Brooks S.Y."/>
            <person name="Buehler E."/>
            <person name="Chan A."/>
            <person name="Chao Q."/>
            <person name="Chen H."/>
            <person name="Cheuk R.F."/>
            <person name="Chin C.W."/>
            <person name="Chung M.K."/>
            <person name="Conn L."/>
            <person name="Conway A.B."/>
            <person name="Conway A.R."/>
            <person name="Creasy T.H."/>
            <person name="Dewar K."/>
            <person name="Dunn P."/>
            <person name="Etgu P."/>
            <person name="Feldblyum T.V."/>
            <person name="Feng J.-D."/>
            <person name="Fong B."/>
            <person name="Fujii C.Y."/>
            <person name="Gill J.E."/>
            <person name="Goldsmith A.D."/>
            <person name="Haas B."/>
            <person name="Hansen N.F."/>
            <person name="Hughes B."/>
            <person name="Huizar L."/>
            <person name="Hunter J.L."/>
            <person name="Jenkins J."/>
            <person name="Johnson-Hopson C."/>
            <person name="Khan S."/>
            <person name="Khaykin E."/>
            <person name="Kim C.J."/>
            <person name="Koo H.L."/>
            <person name="Kremenetskaia I."/>
            <person name="Kurtz D.B."/>
            <person name="Kwan A."/>
            <person name="Lam B."/>
            <person name="Langin-Hooper S."/>
            <person name="Lee A."/>
            <person name="Lee J.M."/>
            <person name="Lenz C.A."/>
            <person name="Li J.H."/>
            <person name="Li Y.-P."/>
            <person name="Lin X."/>
            <person name="Liu S.X."/>
            <person name="Liu Z.A."/>
            <person name="Luros J.S."/>
            <person name="Maiti R."/>
            <person name="Marziali A."/>
            <person name="Militscher J."/>
            <person name="Miranda M."/>
            <person name="Nguyen M."/>
            <person name="Nierman W.C."/>
            <person name="Osborne B.I."/>
            <person name="Pai G."/>
            <person name="Peterson J."/>
            <person name="Pham P.K."/>
            <person name="Rizzo M."/>
            <person name="Rooney T."/>
            <person name="Rowley D."/>
            <person name="Sakano H."/>
            <person name="Salzberg S.L."/>
            <person name="Schwartz J.R."/>
            <person name="Shinn P."/>
            <person name="Southwick A.M."/>
            <person name="Sun H."/>
            <person name="Tallon L.J."/>
            <person name="Tambunga G."/>
            <person name="Toriumi M.J."/>
            <person name="Town C.D."/>
            <person name="Utterback T."/>
            <person name="Van Aken S."/>
            <person name="Vaysberg M."/>
            <person name="Vysotskaia V.S."/>
            <person name="Walker M."/>
            <person name="Wu D."/>
            <person name="Yu G."/>
            <person name="Fraser C.M."/>
            <person name="Venter J.C."/>
            <person name="Davis R.W."/>
        </authorList>
    </citation>
    <scope>NUCLEOTIDE SEQUENCE [LARGE SCALE GENOMIC DNA]</scope>
    <source>
        <strain>cv. Columbia</strain>
    </source>
</reference>
<reference evidence="7" key="3">
    <citation type="journal article" date="2017" name="Plant J.">
        <title>Araport11: a complete reannotation of the Arabidopsis thaliana reference genome.</title>
        <authorList>
            <person name="Cheng C.Y."/>
            <person name="Krishnakumar V."/>
            <person name="Chan A.P."/>
            <person name="Thibaud-Nissen F."/>
            <person name="Schobel S."/>
            <person name="Town C.D."/>
        </authorList>
    </citation>
    <scope>GENOME REANNOTATION</scope>
    <source>
        <strain>cv. Columbia</strain>
    </source>
</reference>
<reference key="4">
    <citation type="journal article" date="2003" name="Science">
        <title>Empirical analysis of transcriptional activity in the Arabidopsis genome.</title>
        <authorList>
            <person name="Yamada K."/>
            <person name="Lim J."/>
            <person name="Dale J.M."/>
            <person name="Chen H."/>
            <person name="Shinn P."/>
            <person name="Palm C.J."/>
            <person name="Southwick A.M."/>
            <person name="Wu H.C."/>
            <person name="Kim C.J."/>
            <person name="Nguyen M."/>
            <person name="Pham P.K."/>
            <person name="Cheuk R.F."/>
            <person name="Karlin-Newmann G."/>
            <person name="Liu S.X."/>
            <person name="Lam B."/>
            <person name="Sakano H."/>
            <person name="Wu T."/>
            <person name="Yu G."/>
            <person name="Miranda M."/>
            <person name="Quach H.L."/>
            <person name="Tripp M."/>
            <person name="Chang C.H."/>
            <person name="Lee J.M."/>
            <person name="Toriumi M.J."/>
            <person name="Chan M.M."/>
            <person name="Tang C.C."/>
            <person name="Onodera C.S."/>
            <person name="Deng J.M."/>
            <person name="Akiyama K."/>
            <person name="Ansari Y."/>
            <person name="Arakawa T."/>
            <person name="Banh J."/>
            <person name="Banno F."/>
            <person name="Bowser L."/>
            <person name="Brooks S.Y."/>
            <person name="Carninci P."/>
            <person name="Chao Q."/>
            <person name="Choy N."/>
            <person name="Enju A."/>
            <person name="Goldsmith A.D."/>
            <person name="Gurjal M."/>
            <person name="Hansen N.F."/>
            <person name="Hayashizaki Y."/>
            <person name="Johnson-Hopson C."/>
            <person name="Hsuan V.W."/>
            <person name="Iida K."/>
            <person name="Karnes M."/>
            <person name="Khan S."/>
            <person name="Koesema E."/>
            <person name="Ishida J."/>
            <person name="Jiang P.X."/>
            <person name="Jones T."/>
            <person name="Kawai J."/>
            <person name="Kamiya A."/>
            <person name="Meyers C."/>
            <person name="Nakajima M."/>
            <person name="Narusaka M."/>
            <person name="Seki M."/>
            <person name="Sakurai T."/>
            <person name="Satou M."/>
            <person name="Tamse R."/>
            <person name="Vaysberg M."/>
            <person name="Wallender E.K."/>
            <person name="Wong C."/>
            <person name="Yamamura Y."/>
            <person name="Yuan S."/>
            <person name="Shinozaki K."/>
            <person name="Davis R.W."/>
            <person name="Theologis A."/>
            <person name="Ecker J.R."/>
        </authorList>
    </citation>
    <scope>NUCLEOTIDE SEQUENCE [LARGE SCALE MRNA]</scope>
    <source>
        <strain>cv. Columbia</strain>
    </source>
</reference>
<reference key="5">
    <citation type="journal article" date="2008" name="Trends Plant Sci.">
        <title>The plant B3 superfamily.</title>
        <authorList>
            <person name="Swaminathan K."/>
            <person name="Peterson K."/>
            <person name="Jack T."/>
        </authorList>
    </citation>
    <scope>GENE FAMILY</scope>
</reference>
<reference key="6">
    <citation type="journal article" date="2004" name="Plant Cell">
        <title>Solution structure of the B3 DNA binding domain of the Arabidopsis cold-responsive transcription factor RAV1.</title>
        <authorList>
            <person name="Yamasaki K."/>
            <person name="Kigawa T."/>
            <person name="Inoue M."/>
            <person name="Tateno M."/>
            <person name="Yamasaki T."/>
            <person name="Yabuki T."/>
            <person name="Aoki M."/>
            <person name="Seki E."/>
            <person name="Matsuda T."/>
            <person name="Tomo Y."/>
            <person name="Hayami N."/>
            <person name="Terada T."/>
            <person name="Shirouzu M."/>
            <person name="Osanai T."/>
            <person name="Tanaka A."/>
            <person name="Seki M."/>
            <person name="Shinozaki K."/>
            <person name="Yokoyama S."/>
        </authorList>
    </citation>
    <scope>STRUCTURE BY NMR OF 182-298</scope>
</reference>
<reference key="7">
    <citation type="journal article" date="2006" name="Plant Physiol.">
        <title>Genome-wide analysis of the ERF gene family in Arabidopsis and rice.</title>
        <authorList>
            <person name="Nakano T."/>
            <person name="Suzuki K."/>
            <person name="Fujimura T."/>
            <person name="Shinshi H."/>
        </authorList>
    </citation>
    <scope>GENE FAMILY</scope>
    <scope>NOMENCLATURE</scope>
</reference>
<reference key="8">
    <citation type="journal article" date="2004" name="Cell Res.">
        <title>Arabidopsis RAV1 is down-regulated by brassinosteroid and may act as a negative regulator during plant development.</title>
        <authorList>
            <person name="Hu Y.X."/>
            <person name="Wang Y.H."/>
            <person name="Liu X.F."/>
            <person name="Li J.Y."/>
        </authorList>
    </citation>
    <scope>FUNCTION</scope>
    <scope>INDUCTION</scope>
</reference>
<sequence length="344" mass="38597">MESSSVDESTTSTGSICETPAITPAKKSSVGNLYRMGSGSSVVLDSENGVEAESRKLPSSKYKGVVPQPNGRWGAQIYEKHQRVWLGTFNEEDEAARAYDVAVHRFRRRDAVTNFKDVKMDEDEVDFLNSHSKSEIVDMLRKHTYNEELEQSKRRRNGNGNMTRTLLTSGLSNDGVSTTGFRSAEALFEKAVTPSDVGKLNRLVIPKHHAEKHFPLPSSNVSVKGVLLNFEDVNGKVWRFRYSYWNSSQSYVLTKGWSRFVKEKNLRAGDVVSFSRSNGQDQQLYIGWKSRSGSDLDAGRVLRLFGVNISPESSRNDVVGNKRVNDTEMLSLVCSKKQRIFHAS</sequence>
<accession>Q9ZWM9</accession>
<feature type="chain" id="PRO_0000112571" description="AP2/ERF and B3 domain-containing transcription factor RAV1">
    <location>
        <begin position="1"/>
        <end position="344"/>
    </location>
</feature>
<feature type="DNA-binding region" description="AP2/ERF" evidence="2">
    <location>
        <begin position="61"/>
        <end position="116"/>
    </location>
</feature>
<feature type="DNA-binding region" description="TF-B3" evidence="1">
    <location>
        <begin position="188"/>
        <end position="292"/>
    </location>
</feature>
<feature type="region of interest" description="Disordered" evidence="3">
    <location>
        <begin position="1"/>
        <end position="22"/>
    </location>
</feature>
<feature type="region of interest" description="Disordered" evidence="3">
    <location>
        <begin position="148"/>
        <end position="169"/>
    </location>
</feature>
<feature type="compositionally biased region" description="Low complexity" evidence="3">
    <location>
        <begin position="1"/>
        <end position="15"/>
    </location>
</feature>
<feature type="strand" evidence="8">
    <location>
        <begin position="185"/>
        <end position="191"/>
    </location>
</feature>
<feature type="turn" evidence="8">
    <location>
        <begin position="194"/>
        <end position="197"/>
    </location>
</feature>
<feature type="strand" evidence="8">
    <location>
        <begin position="198"/>
        <end position="200"/>
    </location>
</feature>
<feature type="strand" evidence="8">
    <location>
        <begin position="203"/>
        <end position="205"/>
    </location>
</feature>
<feature type="helix" evidence="8">
    <location>
        <begin position="207"/>
        <end position="210"/>
    </location>
</feature>
<feature type="turn" evidence="8">
    <location>
        <begin position="211"/>
        <end position="213"/>
    </location>
</feature>
<feature type="strand" evidence="8">
    <location>
        <begin position="226"/>
        <end position="232"/>
    </location>
</feature>
<feature type="turn" evidence="8">
    <location>
        <begin position="233"/>
        <end position="235"/>
    </location>
</feature>
<feature type="strand" evidence="8">
    <location>
        <begin position="236"/>
        <end position="245"/>
    </location>
</feature>
<feature type="turn" evidence="8">
    <location>
        <begin position="246"/>
        <end position="249"/>
    </location>
</feature>
<feature type="strand" evidence="8">
    <location>
        <begin position="250"/>
        <end position="256"/>
    </location>
</feature>
<feature type="helix" evidence="8">
    <location>
        <begin position="257"/>
        <end position="263"/>
    </location>
</feature>
<feature type="strand" evidence="8">
    <location>
        <begin position="271"/>
        <end position="276"/>
    </location>
</feature>
<feature type="strand" evidence="8">
    <location>
        <begin position="279"/>
        <end position="281"/>
    </location>
</feature>
<feature type="strand" evidence="8">
    <location>
        <begin position="284"/>
        <end position="289"/>
    </location>
</feature>